<gene>
    <name type="primary">ndhG</name>
    <name type="ordered locus">PS045</name>
</gene>
<name>NU6C_SACHY</name>
<reference key="1">
    <citation type="journal article" date="2004" name="Curr. Genet.">
        <title>Structural features and transcript-editing analysis of sugarcane (Saccharum officinarum L.) chloroplast genome.</title>
        <authorList>
            <person name="Calsa T. Jr."/>
            <person name="Carraro D.M."/>
            <person name="Benatti M.R."/>
            <person name="Barbosa A.C."/>
            <person name="Kitajima J.P."/>
            <person name="Carrer H."/>
        </authorList>
    </citation>
    <scope>NUCLEOTIDE SEQUENCE [LARGE SCALE GENOMIC DNA]</scope>
    <source>
        <strain>cv. SP-80-3280</strain>
    </source>
</reference>
<accession>Q6L3D7</accession>
<geneLocation type="chloroplast"/>
<keyword id="KW-0150">Chloroplast</keyword>
<keyword id="KW-0472">Membrane</keyword>
<keyword id="KW-0520">NAD</keyword>
<keyword id="KW-0521">NADP</keyword>
<keyword id="KW-0934">Plastid</keyword>
<keyword id="KW-0618">Plastoquinone</keyword>
<keyword id="KW-0874">Quinone</keyword>
<keyword id="KW-0793">Thylakoid</keyword>
<keyword id="KW-1278">Translocase</keyword>
<keyword id="KW-0812">Transmembrane</keyword>
<keyword id="KW-1133">Transmembrane helix</keyword>
<keyword id="KW-0813">Transport</keyword>
<sequence length="176" mass="19467">MDLPGPIHEILVLFGGFVLLLGGLGVVLLTNPIYSAFSLGLVLVCISLFYFLLNSYFVAVAQLLIYVGAINVLIIFAVMFVNGSEWSKDKNYWTIGDGFTLLLCITIPFSLMTTIPDTSWYGILWTTRSNQIVEQGLINNVQQIGIHLATDFYLPFELISLILLVSLIGAITMARQ</sequence>
<comment type="function">
    <text evidence="1">NDH shuttles electrons from NAD(P)H:plastoquinone, via FMN and iron-sulfur (Fe-S) centers, to quinones in the photosynthetic chain and possibly in a chloroplast respiratory chain. The immediate electron acceptor for the enzyme in this species is believed to be plastoquinone. Couples the redox reaction to proton translocation, and thus conserves the redox energy in a proton gradient (By similarity).</text>
</comment>
<comment type="catalytic activity">
    <reaction>
        <text>a plastoquinone + NADH + (n+1) H(+)(in) = a plastoquinol + NAD(+) + n H(+)(out)</text>
        <dbReference type="Rhea" id="RHEA:42608"/>
        <dbReference type="Rhea" id="RHEA-COMP:9561"/>
        <dbReference type="Rhea" id="RHEA-COMP:9562"/>
        <dbReference type="ChEBI" id="CHEBI:15378"/>
        <dbReference type="ChEBI" id="CHEBI:17757"/>
        <dbReference type="ChEBI" id="CHEBI:57540"/>
        <dbReference type="ChEBI" id="CHEBI:57945"/>
        <dbReference type="ChEBI" id="CHEBI:62192"/>
    </reaction>
</comment>
<comment type="catalytic activity">
    <reaction>
        <text>a plastoquinone + NADPH + (n+1) H(+)(in) = a plastoquinol + NADP(+) + n H(+)(out)</text>
        <dbReference type="Rhea" id="RHEA:42612"/>
        <dbReference type="Rhea" id="RHEA-COMP:9561"/>
        <dbReference type="Rhea" id="RHEA-COMP:9562"/>
        <dbReference type="ChEBI" id="CHEBI:15378"/>
        <dbReference type="ChEBI" id="CHEBI:17757"/>
        <dbReference type="ChEBI" id="CHEBI:57783"/>
        <dbReference type="ChEBI" id="CHEBI:58349"/>
        <dbReference type="ChEBI" id="CHEBI:62192"/>
    </reaction>
</comment>
<comment type="subunit">
    <text evidence="1">NDH is composed of at least 16 different subunits, 5 of which are encoded in the nucleus.</text>
</comment>
<comment type="subcellular location">
    <subcellularLocation>
        <location evidence="1">Plastid</location>
        <location evidence="1">Chloroplast thylakoid membrane</location>
        <topology evidence="1">Multi-pass membrane protein</topology>
    </subcellularLocation>
</comment>
<comment type="similarity">
    <text evidence="3">Belongs to the complex I subunit 6 family.</text>
</comment>
<dbReference type="EC" id="7.1.1.-"/>
<dbReference type="EMBL" id="AE009947">
    <property type="protein sequence ID" value="AAT44656.1"/>
    <property type="molecule type" value="Genomic_DNA"/>
</dbReference>
<dbReference type="SMR" id="Q6L3D7"/>
<dbReference type="GO" id="GO:0009535">
    <property type="term" value="C:chloroplast thylakoid membrane"/>
    <property type="evidence" value="ECO:0007669"/>
    <property type="project" value="UniProtKB-SubCell"/>
</dbReference>
<dbReference type="GO" id="GO:0008137">
    <property type="term" value="F:NADH dehydrogenase (ubiquinone) activity"/>
    <property type="evidence" value="ECO:0007669"/>
    <property type="project" value="InterPro"/>
</dbReference>
<dbReference type="GO" id="GO:0048038">
    <property type="term" value="F:quinone binding"/>
    <property type="evidence" value="ECO:0007669"/>
    <property type="project" value="UniProtKB-KW"/>
</dbReference>
<dbReference type="FunFam" id="1.20.120.1200:FF:000002">
    <property type="entry name" value="NAD(P)H-quinone oxidoreductase subunit 6, chloroplastic"/>
    <property type="match status" value="1"/>
</dbReference>
<dbReference type="Gene3D" id="1.20.120.1200">
    <property type="entry name" value="NADH-ubiquinone/plastoquinone oxidoreductase chain 6, subunit NuoJ"/>
    <property type="match status" value="1"/>
</dbReference>
<dbReference type="InterPro" id="IPR050290">
    <property type="entry name" value="NAD(P)H-Q_Oxidoreduct_6"/>
</dbReference>
<dbReference type="InterPro" id="IPR001457">
    <property type="entry name" value="NADH_UbQ/plastoQ_OxRdtase_su6"/>
</dbReference>
<dbReference type="InterPro" id="IPR042106">
    <property type="entry name" value="Nuo/plastoQ_OxRdtase_6_NuoJ"/>
</dbReference>
<dbReference type="PANTHER" id="PTHR48479">
    <property type="entry name" value="NAD(P)H-QUINONE OXIDOREDUCTASE SUBUNIT 6, CHLOROPLASTIC"/>
    <property type="match status" value="1"/>
</dbReference>
<dbReference type="PANTHER" id="PTHR48479:SF1">
    <property type="entry name" value="NAD(P)H-QUINONE OXIDOREDUCTASE SUBUNIT 6, CHLOROPLASTIC"/>
    <property type="match status" value="1"/>
</dbReference>
<dbReference type="Pfam" id="PF00499">
    <property type="entry name" value="Oxidored_q3"/>
    <property type="match status" value="1"/>
</dbReference>
<proteinExistence type="inferred from homology"/>
<organism>
    <name type="scientific">Saccharum hybrid</name>
    <name type="common">Sugarcane</name>
    <dbReference type="NCBI Taxonomy" id="15819"/>
    <lineage>
        <taxon>Eukaryota</taxon>
        <taxon>Viridiplantae</taxon>
        <taxon>Streptophyta</taxon>
        <taxon>Embryophyta</taxon>
        <taxon>Tracheophyta</taxon>
        <taxon>Spermatophyta</taxon>
        <taxon>Magnoliopsida</taxon>
        <taxon>Liliopsida</taxon>
        <taxon>Poales</taxon>
        <taxon>Poaceae</taxon>
        <taxon>PACMAD clade</taxon>
        <taxon>Panicoideae</taxon>
        <taxon>Andropogonodae</taxon>
        <taxon>Andropogoneae</taxon>
        <taxon>Saccharinae</taxon>
        <taxon>Saccharum</taxon>
    </lineage>
</organism>
<feature type="chain" id="PRO_0000226908" description="NAD(P)H-quinone oxidoreductase subunit 6, chloroplastic">
    <location>
        <begin position="1"/>
        <end position="176"/>
    </location>
</feature>
<feature type="transmembrane region" description="Helical" evidence="2">
    <location>
        <begin position="10"/>
        <end position="30"/>
    </location>
</feature>
<feature type="transmembrane region" description="Helical" evidence="2">
    <location>
        <begin position="33"/>
        <end position="53"/>
    </location>
</feature>
<feature type="transmembrane region" description="Helical" evidence="2">
    <location>
        <begin position="60"/>
        <end position="80"/>
    </location>
</feature>
<feature type="transmembrane region" description="Helical" evidence="2">
    <location>
        <begin position="95"/>
        <end position="115"/>
    </location>
</feature>
<feature type="transmembrane region" description="Helical" evidence="2">
    <location>
        <begin position="152"/>
        <end position="172"/>
    </location>
</feature>
<evidence type="ECO:0000250" key="1"/>
<evidence type="ECO:0000255" key="2"/>
<evidence type="ECO:0000305" key="3"/>
<protein>
    <recommendedName>
        <fullName>NAD(P)H-quinone oxidoreductase subunit 6, chloroplastic</fullName>
        <ecNumber>7.1.1.-</ecNumber>
    </recommendedName>
    <alternativeName>
        <fullName>NAD(P)H dehydrogenase subunit 6</fullName>
    </alternativeName>
    <alternativeName>
        <fullName>NADH-plastoquinone oxidoreductase subunit 6</fullName>
    </alternativeName>
</protein>